<name>VATH_YEAST</name>
<keyword id="KW-0002">3D-structure</keyword>
<keyword id="KW-0375">Hydrogen ion transport</keyword>
<keyword id="KW-0406">Ion transport</keyword>
<keyword id="KW-0472">Membrane</keyword>
<keyword id="KW-1185">Reference proteome</keyword>
<keyword id="KW-0813">Transport</keyword>
<keyword id="KW-0926">Vacuole</keyword>
<reference key="1">
    <citation type="journal article" date="1993" name="J. Biol. Chem.">
        <title>VMA13 encodes a 54-kDa vacuolar H(+)-ATPase subunit required for activity but not assembly of the enzyme complex in Saccharomyces cerevisiae.</title>
        <authorList>
            <person name="Ho M.N."/>
            <person name="Hirata R."/>
            <person name="Umemoto N."/>
            <person name="Ohya Y."/>
            <person name="Takatsuki A."/>
            <person name="Stevens T.H."/>
            <person name="Anraku Y."/>
        </authorList>
    </citation>
    <scope>NUCLEOTIDE SEQUENCE [GENOMIC DNA]</scope>
    <scope>FUNCTION</scope>
    <scope>IDENTIFICATION IN THE V-ATPASE COMPLEX</scope>
    <scope>SUBCELLULAR LOCATION</scope>
    <source>
        <strain>ATCC 26786 / X2180-1A</strain>
    </source>
</reference>
<reference key="2">
    <citation type="journal article" date="1997" name="Nature">
        <title>The nucleotide sequence of Saccharomyces cerevisiae chromosome XVI.</title>
        <authorList>
            <person name="Bussey H."/>
            <person name="Storms R.K."/>
            <person name="Ahmed A."/>
            <person name="Albermann K."/>
            <person name="Allen E."/>
            <person name="Ansorge W."/>
            <person name="Araujo R."/>
            <person name="Aparicio A."/>
            <person name="Barrell B.G."/>
            <person name="Badcock K."/>
            <person name="Benes V."/>
            <person name="Botstein D."/>
            <person name="Bowman S."/>
            <person name="Brueckner M."/>
            <person name="Carpenter J."/>
            <person name="Cherry J.M."/>
            <person name="Chung E."/>
            <person name="Churcher C.M."/>
            <person name="Coster F."/>
            <person name="Davis K."/>
            <person name="Davis R.W."/>
            <person name="Dietrich F.S."/>
            <person name="Delius H."/>
            <person name="DiPaolo T."/>
            <person name="Dubois E."/>
            <person name="Duesterhoeft A."/>
            <person name="Duncan M."/>
            <person name="Floeth M."/>
            <person name="Fortin N."/>
            <person name="Friesen J.D."/>
            <person name="Fritz C."/>
            <person name="Goffeau A."/>
            <person name="Hall J."/>
            <person name="Hebling U."/>
            <person name="Heumann K."/>
            <person name="Hilbert H."/>
            <person name="Hillier L.W."/>
            <person name="Hunicke-Smith S."/>
            <person name="Hyman R.W."/>
            <person name="Johnston M."/>
            <person name="Kalman S."/>
            <person name="Kleine K."/>
            <person name="Komp C."/>
            <person name="Kurdi O."/>
            <person name="Lashkari D."/>
            <person name="Lew H."/>
            <person name="Lin A."/>
            <person name="Lin D."/>
            <person name="Louis E.J."/>
            <person name="Marathe R."/>
            <person name="Messenguy F."/>
            <person name="Mewes H.-W."/>
            <person name="Mirtipati S."/>
            <person name="Moestl D."/>
            <person name="Mueller-Auer S."/>
            <person name="Namath A."/>
            <person name="Nentwich U."/>
            <person name="Oefner P."/>
            <person name="Pearson D."/>
            <person name="Petel F.X."/>
            <person name="Pohl T.M."/>
            <person name="Purnelle B."/>
            <person name="Rajandream M.A."/>
            <person name="Rechmann S."/>
            <person name="Rieger M."/>
            <person name="Riles L."/>
            <person name="Roberts D."/>
            <person name="Schaefer M."/>
            <person name="Scharfe M."/>
            <person name="Scherens B."/>
            <person name="Schramm S."/>
            <person name="Schroeder M."/>
            <person name="Sdicu A.-M."/>
            <person name="Tettelin H."/>
            <person name="Urrestarazu L.A."/>
            <person name="Ushinsky S."/>
            <person name="Vierendeels F."/>
            <person name="Vissers S."/>
            <person name="Voss H."/>
            <person name="Walsh S.V."/>
            <person name="Wambutt R."/>
            <person name="Wang Y."/>
            <person name="Wedler E."/>
            <person name="Wedler H."/>
            <person name="Winnett E."/>
            <person name="Zhong W.-W."/>
            <person name="Zollner A."/>
            <person name="Vo D.H."/>
            <person name="Hani J."/>
        </authorList>
    </citation>
    <scope>NUCLEOTIDE SEQUENCE [LARGE SCALE GENOMIC DNA]</scope>
    <source>
        <strain>ATCC 204508 / S288c</strain>
    </source>
</reference>
<reference key="3">
    <citation type="journal article" date="2014" name="G3 (Bethesda)">
        <title>The reference genome sequence of Saccharomyces cerevisiae: Then and now.</title>
        <authorList>
            <person name="Engel S.R."/>
            <person name="Dietrich F.S."/>
            <person name="Fisk D.G."/>
            <person name="Binkley G."/>
            <person name="Balakrishnan R."/>
            <person name="Costanzo M.C."/>
            <person name="Dwight S.S."/>
            <person name="Hitz B.C."/>
            <person name="Karra K."/>
            <person name="Nash R.S."/>
            <person name="Weng S."/>
            <person name="Wong E.D."/>
            <person name="Lloyd P."/>
            <person name="Skrzypek M.S."/>
            <person name="Miyasato S.R."/>
            <person name="Simison M."/>
            <person name="Cherry J.M."/>
        </authorList>
    </citation>
    <scope>GENOME REANNOTATION</scope>
    <source>
        <strain>ATCC 204508 / S288c</strain>
    </source>
</reference>
<reference key="4">
    <citation type="journal article" date="2000" name="J. Biol. Chem.">
        <title>Regulation of yeast ectoapyrase ynd1p activity by activator subunit Vma13p of vacuolar H+-ATPase.</title>
        <authorList>
            <person name="Zhong X."/>
            <person name="Malhotra R."/>
            <person name="Guidotti G."/>
        </authorList>
    </citation>
    <scope>INTERACTION WITH YND1</scope>
</reference>
<reference key="5">
    <citation type="journal article" date="2003" name="Nature">
        <title>Global analysis of protein expression in yeast.</title>
        <authorList>
            <person name="Ghaemmaghami S."/>
            <person name="Huh W.-K."/>
            <person name="Bower K."/>
            <person name="Howson R.W."/>
            <person name="Belle A."/>
            <person name="Dephoure N."/>
            <person name="O'Shea E.K."/>
            <person name="Weissman J.S."/>
        </authorList>
    </citation>
    <scope>LEVEL OF PROTEIN EXPRESSION [LARGE SCALE ANALYSIS]</scope>
</reference>
<reference key="6">
    <citation type="journal article" date="2008" name="J. Biol. Chem.">
        <title>Stoichiometry of the peripheral stalk subunits E and G of yeast V1-ATPase determined by mass spectrometry.</title>
        <authorList>
            <person name="Kitagawa N."/>
            <person name="Mazon H."/>
            <person name="Heck A.J.R."/>
            <person name="Wilkens S."/>
        </authorList>
    </citation>
    <scope>IDENTIFICATION IN THE V-ATPASE COMPLEX</scope>
    <scope>MASS SPECTROMETRY</scope>
    <scope>CLEAVAGE OF INITIATOR METHIONINE</scope>
</reference>
<reference key="7">
    <citation type="journal article" date="2008" name="Mol. Cell. Proteomics">
        <title>A multidimensional chromatography technology for in-depth phosphoproteome analysis.</title>
        <authorList>
            <person name="Albuquerque C.P."/>
            <person name="Smolka M.B."/>
            <person name="Payne S.H."/>
            <person name="Bafna V."/>
            <person name="Eng J."/>
            <person name="Zhou H."/>
        </authorList>
    </citation>
    <scope>IDENTIFICATION BY MASS SPECTROMETRY [LARGE SCALE ANALYSIS]</scope>
</reference>
<reference key="8">
    <citation type="journal article" date="2012" name="Proc. Natl. Acad. Sci. U.S.A.">
        <title>N-terminal acetylome analyses and functional insights of the N-terminal acetyltransferase NatB.</title>
        <authorList>
            <person name="Van Damme P."/>
            <person name="Lasa M."/>
            <person name="Polevoda B."/>
            <person name="Gazquez C."/>
            <person name="Elosegui-Artola A."/>
            <person name="Kim D.S."/>
            <person name="De Juan-Pardo E."/>
            <person name="Demeyer K."/>
            <person name="Hole K."/>
            <person name="Larrea E."/>
            <person name="Timmerman E."/>
            <person name="Prieto J."/>
            <person name="Arnesen T."/>
            <person name="Sherman F."/>
            <person name="Gevaert K."/>
            <person name="Aldabe R."/>
        </authorList>
    </citation>
    <scope>IDENTIFICATION BY MASS SPECTROMETRY [LARGE SCALE ANALYSIS]</scope>
</reference>
<reference key="9">
    <citation type="journal article" date="2001" name="Proc. Natl. Acad. Sci. U.S.A.">
        <title>Crystal structure of the regulatory subunit H of the V-type ATPase of Saccharomyces cerevisiae.</title>
        <authorList>
            <person name="Sagermann M."/>
            <person name="Stevens T.H."/>
            <person name="Matthews B.W."/>
        </authorList>
    </citation>
    <scope>X-RAY CRYSTALLOGRAPHY (2.95 ANGSTROMS)</scope>
</reference>
<reference evidence="9 10 11" key="10">
    <citation type="journal article" date="2015" name="Nature">
        <title>Electron cryomicroscopy observation of rotational states in a eukaryotic V-ATPase.</title>
        <authorList>
            <person name="Zhao J."/>
            <person name="Benlekbir S."/>
            <person name="Rubinstein J.L."/>
        </authorList>
    </citation>
    <scope>STRUCTURE BY ELECTRON MICROSCOPY (6.90 ANGSTROMS)</scope>
    <scope>IDENTIFICATION IN THE V-ATPASE COMPLEX</scope>
</reference>
<reference evidence="12 13" key="11">
    <citation type="journal article" date="2016" name="EMBO J.">
        <title>Crystal structure of yeast V1-ATPase in the autoinhibited state.</title>
        <authorList>
            <person name="Oot R.A."/>
            <person name="Kane P.M."/>
            <person name="Berry E.A."/>
            <person name="Wilkens S."/>
        </authorList>
    </citation>
    <scope>X-RAY CRYSTALLOGRAPHY (6.20 ANGSTROMS)</scope>
    <scope>FUNCTION</scope>
    <scope>IDENTIFICATION IN THE V-ATPASE COMPLEX</scope>
    <scope>DISRUPTION PHENOTYPE</scope>
    <scope>MUTAGENESIS OF 405-LYS--ILE-418 AND ASP-410</scope>
</reference>
<gene>
    <name evidence="7" type="primary">VMA13</name>
    <name type="synonym">CLS11</name>
    <name type="ordered locus">YPR036W</name>
    <name type="ORF">YP3085.02</name>
</gene>
<feature type="initiator methionine" description="Removed" evidence="3">
    <location>
        <position position="1"/>
    </location>
</feature>
<feature type="chain" id="PRO_0000124202" description="V-type proton ATPase subunit H">
    <location>
        <begin position="2"/>
        <end position="478"/>
    </location>
</feature>
<feature type="mutagenesis site" description="Increases the ATPase activity of membrane-detached V-ATPase V1, appears to have no effect on cell population growth." evidence="5">
    <original>KVRNGDVNAKQEKI</original>
    <variation>GDVN</variation>
    <location>
        <begin position="405"/>
        <end position="418"/>
    </location>
</feature>
<feature type="mutagenesis site" description="Appears to have no effect on the ATPase activity of membrane-detached V-ATPase V1 or on cell population growth." evidence="5">
    <original>D</original>
    <variation>A</variation>
    <location>
        <position position="410"/>
    </location>
</feature>
<feature type="turn" evidence="15">
    <location>
        <begin position="6"/>
        <end position="9"/>
    </location>
</feature>
<feature type="helix" evidence="14">
    <location>
        <begin position="11"/>
        <end position="22"/>
    </location>
</feature>
<feature type="helix" evidence="14">
    <location>
        <begin position="27"/>
        <end position="32"/>
    </location>
</feature>
<feature type="helix" evidence="14">
    <location>
        <begin position="38"/>
        <end position="52"/>
    </location>
</feature>
<feature type="helix" evidence="15">
    <location>
        <begin position="74"/>
        <end position="76"/>
    </location>
</feature>
<feature type="helix" evidence="14">
    <location>
        <begin position="77"/>
        <end position="85"/>
    </location>
</feature>
<feature type="helix" evidence="14">
    <location>
        <begin position="90"/>
        <end position="105"/>
    </location>
</feature>
<feature type="strand" evidence="14">
    <location>
        <begin position="107"/>
        <end position="110"/>
    </location>
</feature>
<feature type="helix" evidence="14">
    <location>
        <begin position="111"/>
        <end position="119"/>
    </location>
</feature>
<feature type="helix" evidence="14">
    <location>
        <begin position="123"/>
        <end position="130"/>
    </location>
</feature>
<feature type="helix" evidence="14">
    <location>
        <begin position="136"/>
        <end position="150"/>
    </location>
</feature>
<feature type="turn" evidence="14">
    <location>
        <begin position="153"/>
        <end position="155"/>
    </location>
</feature>
<feature type="helix" evidence="14">
    <location>
        <begin position="158"/>
        <end position="166"/>
    </location>
</feature>
<feature type="helix" evidence="14">
    <location>
        <begin position="168"/>
        <end position="175"/>
    </location>
</feature>
<feature type="helix" evidence="14">
    <location>
        <begin position="180"/>
        <end position="194"/>
    </location>
</feature>
<feature type="helix" evidence="14">
    <location>
        <begin position="197"/>
        <end position="204"/>
    </location>
</feature>
<feature type="helix" evidence="14">
    <location>
        <begin position="207"/>
        <end position="222"/>
    </location>
</feature>
<feature type="helix" evidence="14">
    <location>
        <begin position="239"/>
        <end position="253"/>
    </location>
</feature>
<feature type="helix" evidence="14">
    <location>
        <begin position="257"/>
        <end position="264"/>
    </location>
</feature>
<feature type="helix" evidence="14">
    <location>
        <begin position="268"/>
        <end position="280"/>
    </location>
</feature>
<feature type="helix" evidence="14">
    <location>
        <begin position="284"/>
        <end position="296"/>
    </location>
</feature>
<feature type="strand" evidence="14">
    <location>
        <begin position="299"/>
        <end position="302"/>
    </location>
</feature>
<feature type="helix" evidence="14">
    <location>
        <begin position="305"/>
        <end position="316"/>
    </location>
</feature>
<feature type="helix" evidence="14">
    <location>
        <begin position="318"/>
        <end position="326"/>
    </location>
</feature>
<feature type="helix" evidence="14">
    <location>
        <begin position="333"/>
        <end position="351"/>
    </location>
</feature>
<feature type="helix" evidence="14">
    <location>
        <begin position="355"/>
        <end position="365"/>
    </location>
</feature>
<feature type="helix" evidence="14">
    <location>
        <begin position="372"/>
        <end position="375"/>
    </location>
</feature>
<feature type="helix" evidence="14">
    <location>
        <begin position="377"/>
        <end position="383"/>
    </location>
</feature>
<feature type="helix" evidence="14">
    <location>
        <begin position="385"/>
        <end position="387"/>
    </location>
</feature>
<feature type="helix" evidence="14">
    <location>
        <begin position="390"/>
        <end position="392"/>
    </location>
</feature>
<feature type="helix" evidence="14">
    <location>
        <begin position="393"/>
        <end position="407"/>
    </location>
</feature>
<feature type="helix" evidence="15">
    <location>
        <begin position="408"/>
        <end position="410"/>
    </location>
</feature>
<feature type="helix" evidence="14">
    <location>
        <begin position="414"/>
        <end position="433"/>
    </location>
</feature>
<feature type="helix" evidence="14">
    <location>
        <begin position="435"/>
        <end position="437"/>
    </location>
</feature>
<feature type="helix" evidence="14">
    <location>
        <begin position="438"/>
        <end position="444"/>
    </location>
</feature>
<feature type="helix" evidence="14">
    <location>
        <begin position="446"/>
        <end position="453"/>
    </location>
</feature>
<feature type="helix" evidence="14">
    <location>
        <begin position="459"/>
        <end position="475"/>
    </location>
</feature>
<dbReference type="EMBL" id="D13916">
    <property type="protein sequence ID" value="BAA03011.1"/>
    <property type="molecule type" value="Genomic_DNA"/>
</dbReference>
<dbReference type="EMBL" id="Z68111">
    <property type="protein sequence ID" value="CAA92142.1"/>
    <property type="molecule type" value="Genomic_DNA"/>
</dbReference>
<dbReference type="EMBL" id="Z71255">
    <property type="protein sequence ID" value="CAA94986.1"/>
    <property type="molecule type" value="Genomic_DNA"/>
</dbReference>
<dbReference type="EMBL" id="BK006949">
    <property type="protein sequence ID" value="DAA11462.1"/>
    <property type="molecule type" value="Genomic_DNA"/>
</dbReference>
<dbReference type="PIR" id="A47429">
    <property type="entry name" value="A47429"/>
</dbReference>
<dbReference type="RefSeq" id="NP_015361.1">
    <property type="nucleotide sequence ID" value="NM_001184133.1"/>
</dbReference>
<dbReference type="PDB" id="1HO8">
    <property type="method" value="X-ray"/>
    <property type="resolution" value="2.95 A"/>
    <property type="chains" value="A=1-478"/>
</dbReference>
<dbReference type="PDB" id="3J9T">
    <property type="method" value="EM"/>
    <property type="resolution" value="6.90 A"/>
    <property type="chains" value="P=1-478"/>
</dbReference>
<dbReference type="PDB" id="3J9U">
    <property type="method" value="EM"/>
    <property type="resolution" value="7.60 A"/>
    <property type="chains" value="P=1-478"/>
</dbReference>
<dbReference type="PDB" id="3J9V">
    <property type="method" value="EM"/>
    <property type="resolution" value="8.30 A"/>
    <property type="chains" value="P=1-478"/>
</dbReference>
<dbReference type="PDB" id="5BW9">
    <property type="method" value="X-ray"/>
    <property type="resolution" value="7.00 A"/>
    <property type="chains" value="H/h=1-478"/>
</dbReference>
<dbReference type="PDB" id="5D80">
    <property type="method" value="X-ray"/>
    <property type="resolution" value="6.20 A"/>
    <property type="chains" value="H/h=1-478"/>
</dbReference>
<dbReference type="PDB" id="5VOX">
    <property type="method" value="EM"/>
    <property type="resolution" value="6.80 A"/>
    <property type="chains" value="P=1-478"/>
</dbReference>
<dbReference type="PDB" id="5VOY">
    <property type="method" value="EM"/>
    <property type="resolution" value="7.90 A"/>
    <property type="chains" value="P=1-478"/>
</dbReference>
<dbReference type="PDB" id="5VOZ">
    <property type="method" value="EM"/>
    <property type="resolution" value="7.60 A"/>
    <property type="chains" value="P=1-478"/>
</dbReference>
<dbReference type="PDB" id="6O7V">
    <property type="method" value="EM"/>
    <property type="resolution" value="6.60 A"/>
    <property type="chains" value="P=1-478"/>
</dbReference>
<dbReference type="PDB" id="6O7W">
    <property type="method" value="EM"/>
    <property type="resolution" value="7.00 A"/>
    <property type="chains" value="P=1-478"/>
</dbReference>
<dbReference type="PDB" id="6O7X">
    <property type="method" value="EM"/>
    <property type="resolution" value="8.70 A"/>
    <property type="chains" value="P=1-478"/>
</dbReference>
<dbReference type="PDB" id="7FDA">
    <property type="method" value="EM"/>
    <property type="resolution" value="4.20 A"/>
    <property type="chains" value="P=1-359"/>
</dbReference>
<dbReference type="PDB" id="7FDB">
    <property type="method" value="EM"/>
    <property type="resolution" value="4.80 A"/>
    <property type="chains" value="P=1-359"/>
</dbReference>
<dbReference type="PDB" id="7FDC">
    <property type="method" value="EM"/>
    <property type="resolution" value="6.60 A"/>
    <property type="chains" value="P=1-359"/>
</dbReference>
<dbReference type="PDB" id="7TMM">
    <property type="method" value="EM"/>
    <property type="resolution" value="3.50 A"/>
    <property type="chains" value="P=1-478"/>
</dbReference>
<dbReference type="PDB" id="7TMO">
    <property type="method" value="EM"/>
    <property type="resolution" value="3.30 A"/>
    <property type="chains" value="P=1-478"/>
</dbReference>
<dbReference type="PDB" id="7TMP">
    <property type="method" value="EM"/>
    <property type="resolution" value="3.30 A"/>
    <property type="chains" value="P=1-478"/>
</dbReference>
<dbReference type="PDB" id="7TMQ">
    <property type="method" value="EM"/>
    <property type="resolution" value="3.30 A"/>
    <property type="chains" value="P=1-478"/>
</dbReference>
<dbReference type="PDB" id="7TMR">
    <property type="method" value="EM"/>
    <property type="resolution" value="3.50 A"/>
    <property type="chains" value="P=1-478"/>
</dbReference>
<dbReference type="PDB" id="7TMS">
    <property type="method" value="EM"/>
    <property type="resolution" value="3.80 A"/>
    <property type="chains" value="P=1-478"/>
</dbReference>
<dbReference type="PDB" id="7TMT">
    <property type="method" value="EM"/>
    <property type="resolution" value="3.80 A"/>
    <property type="chains" value="P=1-478"/>
</dbReference>
<dbReference type="PDB" id="9COP">
    <property type="method" value="EM"/>
    <property type="resolution" value="2.70 A"/>
    <property type="chains" value="P=1-478"/>
</dbReference>
<dbReference type="PDBsum" id="1HO8"/>
<dbReference type="PDBsum" id="3J9T"/>
<dbReference type="PDBsum" id="3J9U"/>
<dbReference type="PDBsum" id="3J9V"/>
<dbReference type="PDBsum" id="5BW9"/>
<dbReference type="PDBsum" id="5D80"/>
<dbReference type="PDBsum" id="5VOX"/>
<dbReference type="PDBsum" id="5VOY"/>
<dbReference type="PDBsum" id="5VOZ"/>
<dbReference type="PDBsum" id="6O7V"/>
<dbReference type="PDBsum" id="6O7W"/>
<dbReference type="PDBsum" id="6O7X"/>
<dbReference type="PDBsum" id="7FDA"/>
<dbReference type="PDBsum" id="7FDB"/>
<dbReference type="PDBsum" id="7FDC"/>
<dbReference type="PDBsum" id="7TMM"/>
<dbReference type="PDBsum" id="7TMO"/>
<dbReference type="PDBsum" id="7TMP"/>
<dbReference type="PDBsum" id="7TMQ"/>
<dbReference type="PDBsum" id="7TMR"/>
<dbReference type="PDBsum" id="7TMS"/>
<dbReference type="PDBsum" id="7TMT"/>
<dbReference type="PDBsum" id="9COP"/>
<dbReference type="EMDB" id="EMD-0646"/>
<dbReference type="EMDB" id="EMD-0647"/>
<dbReference type="EMDB" id="EMD-0648"/>
<dbReference type="EMDB" id="EMD-25996"/>
<dbReference type="EMDB" id="EMD-25997"/>
<dbReference type="EMDB" id="EMD-25998"/>
<dbReference type="EMDB" id="EMD-25999"/>
<dbReference type="EMDB" id="EMD-26000"/>
<dbReference type="EMDB" id="EMD-26001"/>
<dbReference type="EMDB" id="EMD-26002"/>
<dbReference type="EMDB" id="EMD-45788"/>
<dbReference type="EMDB" id="EMD-8724"/>
<dbReference type="EMDB" id="EMD-8725"/>
<dbReference type="EMDB" id="EMD-8726"/>
<dbReference type="SMR" id="P41807"/>
<dbReference type="BioGRID" id="36214">
    <property type="interactions" value="462"/>
</dbReference>
<dbReference type="ComplexPortal" id="CPX-1192">
    <property type="entry name" value="Vacuolar proton translocating ATPase complex, Golgi variant"/>
</dbReference>
<dbReference type="ComplexPortal" id="CPX-1193">
    <property type="entry name" value="Vacuolar proton translocating ATPase complex, vacuole variant"/>
</dbReference>
<dbReference type="DIP" id="DIP-6640N"/>
<dbReference type="FunCoup" id="P41807">
    <property type="interactions" value="584"/>
</dbReference>
<dbReference type="IntAct" id="P41807">
    <property type="interactions" value="46"/>
</dbReference>
<dbReference type="MINT" id="P41807"/>
<dbReference type="STRING" id="4932.YPR036W"/>
<dbReference type="TCDB" id="3.A.2.2.3">
    <property type="family name" value="the h+- or na+-translocating f-type, v-type and a-type atpase (f-atpase) superfamily"/>
</dbReference>
<dbReference type="iPTMnet" id="P41807"/>
<dbReference type="PaxDb" id="4932-YPR036W"/>
<dbReference type="PeptideAtlas" id="P41807"/>
<dbReference type="EnsemblFungi" id="YPR036W_mRNA">
    <property type="protein sequence ID" value="YPR036W"/>
    <property type="gene ID" value="YPR036W"/>
</dbReference>
<dbReference type="GeneID" id="856148"/>
<dbReference type="KEGG" id="sce:YPR036W"/>
<dbReference type="AGR" id="SGD:S000006240"/>
<dbReference type="SGD" id="S000006240">
    <property type="gene designation" value="VMA13"/>
</dbReference>
<dbReference type="VEuPathDB" id="FungiDB:YPR036W"/>
<dbReference type="eggNOG" id="KOG2759">
    <property type="taxonomic scope" value="Eukaryota"/>
</dbReference>
<dbReference type="GeneTree" id="ENSGT00390000003289"/>
<dbReference type="HOGENOM" id="CLU_025709_4_0_1"/>
<dbReference type="InParanoid" id="P41807"/>
<dbReference type="OMA" id="GIQLQYY"/>
<dbReference type="OrthoDB" id="10263554at2759"/>
<dbReference type="BioCyc" id="YEAST:G3O-34194-MONOMER"/>
<dbReference type="Reactome" id="R-SCE-1222556">
    <property type="pathway name" value="ROS and RNS production in phagocytes"/>
</dbReference>
<dbReference type="Reactome" id="R-SCE-77387">
    <property type="pathway name" value="Insulin receptor recycling"/>
</dbReference>
<dbReference type="Reactome" id="R-SCE-917977">
    <property type="pathway name" value="Transferrin endocytosis and recycling"/>
</dbReference>
<dbReference type="Reactome" id="R-SCE-9639288">
    <property type="pathway name" value="Amino acids regulate mTORC1"/>
</dbReference>
<dbReference type="BioGRID-ORCS" id="856148">
    <property type="hits" value="4 hits in 10 CRISPR screens"/>
</dbReference>
<dbReference type="EvolutionaryTrace" id="P41807"/>
<dbReference type="PRO" id="PR:P41807"/>
<dbReference type="Proteomes" id="UP000002311">
    <property type="component" value="Chromosome XVI"/>
</dbReference>
<dbReference type="RNAct" id="P41807">
    <property type="molecule type" value="protein"/>
</dbReference>
<dbReference type="GO" id="GO:0000329">
    <property type="term" value="C:fungal-type vacuole membrane"/>
    <property type="evidence" value="ECO:0000314"/>
    <property type="project" value="SGD"/>
</dbReference>
<dbReference type="GO" id="GO:0000139">
    <property type="term" value="C:Golgi membrane"/>
    <property type="evidence" value="ECO:0000303"/>
    <property type="project" value="ComplexPortal"/>
</dbReference>
<dbReference type="GO" id="GO:0033176">
    <property type="term" value="C:proton-transporting V-type ATPase complex"/>
    <property type="evidence" value="ECO:0000353"/>
    <property type="project" value="ComplexPortal"/>
</dbReference>
<dbReference type="GO" id="GO:0016471">
    <property type="term" value="C:vacuolar proton-transporting V-type ATPase complex"/>
    <property type="evidence" value="ECO:0000353"/>
    <property type="project" value="ComplexPortal"/>
</dbReference>
<dbReference type="GO" id="GO:0000221">
    <property type="term" value="C:vacuolar proton-transporting V-type ATPase, V1 domain"/>
    <property type="evidence" value="ECO:0000314"/>
    <property type="project" value="UniProtKB"/>
</dbReference>
<dbReference type="GO" id="GO:0046961">
    <property type="term" value="F:proton-transporting ATPase activity, rotational mechanism"/>
    <property type="evidence" value="ECO:0000304"/>
    <property type="project" value="SGD"/>
</dbReference>
<dbReference type="GO" id="GO:0048388">
    <property type="term" value="P:endosomal lumen acidification"/>
    <property type="evidence" value="ECO:0000303"/>
    <property type="project" value="ComplexPortal"/>
</dbReference>
<dbReference type="GO" id="GO:0061795">
    <property type="term" value="P:Golgi lumen acidification"/>
    <property type="evidence" value="ECO:0000303"/>
    <property type="project" value="ComplexPortal"/>
</dbReference>
<dbReference type="GO" id="GO:1902600">
    <property type="term" value="P:proton transmembrane transport"/>
    <property type="evidence" value="ECO:0000314"/>
    <property type="project" value="ComplexPortal"/>
</dbReference>
<dbReference type="GO" id="GO:0007035">
    <property type="term" value="P:vacuolar acidification"/>
    <property type="evidence" value="ECO:0000315"/>
    <property type="project" value="SGD"/>
</dbReference>
<dbReference type="FunFam" id="1.25.10.10:FF:000510">
    <property type="entry name" value="V-type proton ATPase subunit H"/>
    <property type="match status" value="1"/>
</dbReference>
<dbReference type="FunFam" id="1.25.40.150:FF:000002">
    <property type="entry name" value="V-type proton ATPase subunit H"/>
    <property type="match status" value="1"/>
</dbReference>
<dbReference type="Gene3D" id="1.25.10.10">
    <property type="entry name" value="Leucine-rich Repeat Variant"/>
    <property type="match status" value="1"/>
</dbReference>
<dbReference type="Gene3D" id="1.25.40.150">
    <property type="entry name" value="V-type ATPase, subunit H, C-terminal domain"/>
    <property type="match status" value="1"/>
</dbReference>
<dbReference type="InterPro" id="IPR011989">
    <property type="entry name" value="ARM-like"/>
</dbReference>
<dbReference type="InterPro" id="IPR016024">
    <property type="entry name" value="ARM-type_fold"/>
</dbReference>
<dbReference type="InterPro" id="IPR004908">
    <property type="entry name" value="ATPase_V1-cplx_hsu"/>
</dbReference>
<dbReference type="InterPro" id="IPR011987">
    <property type="entry name" value="ATPase_V1-cplx_hsu_C"/>
</dbReference>
<dbReference type="InterPro" id="IPR038497">
    <property type="entry name" value="ATPase_V1-cplx_hsu_C_sf"/>
</dbReference>
<dbReference type="PANTHER" id="PTHR10698">
    <property type="entry name" value="V-TYPE PROTON ATPASE SUBUNIT H"/>
    <property type="match status" value="1"/>
</dbReference>
<dbReference type="PANTHER" id="PTHR10698:SF0">
    <property type="entry name" value="V-TYPE PROTON ATPASE SUBUNIT H"/>
    <property type="match status" value="1"/>
</dbReference>
<dbReference type="Pfam" id="PF11698">
    <property type="entry name" value="V-ATPase_H_C"/>
    <property type="match status" value="1"/>
</dbReference>
<dbReference type="Pfam" id="PF03224">
    <property type="entry name" value="V-ATPase_H_N"/>
    <property type="match status" value="1"/>
</dbReference>
<dbReference type="PIRSF" id="PIRSF032184">
    <property type="entry name" value="ATPase_V1_H"/>
    <property type="match status" value="1"/>
</dbReference>
<dbReference type="SUPFAM" id="SSF48371">
    <property type="entry name" value="ARM repeat"/>
    <property type="match status" value="1"/>
</dbReference>
<evidence type="ECO:0000269" key="1">
    <source>
    </source>
</evidence>
<evidence type="ECO:0000269" key="2">
    <source>
    </source>
</evidence>
<evidence type="ECO:0000269" key="3">
    <source>
    </source>
</evidence>
<evidence type="ECO:0000269" key="4">
    <source>
    </source>
</evidence>
<evidence type="ECO:0000269" key="5">
    <source>
    </source>
</evidence>
<evidence type="ECO:0000269" key="6">
    <source>
    </source>
</evidence>
<evidence type="ECO:0000303" key="7">
    <source>
    </source>
</evidence>
<evidence type="ECO:0000305" key="8"/>
<evidence type="ECO:0007744" key="9">
    <source>
        <dbReference type="PDB" id="3J9T"/>
    </source>
</evidence>
<evidence type="ECO:0007744" key="10">
    <source>
        <dbReference type="PDB" id="3J9U"/>
    </source>
</evidence>
<evidence type="ECO:0007744" key="11">
    <source>
        <dbReference type="PDB" id="3J9V"/>
    </source>
</evidence>
<evidence type="ECO:0007744" key="12">
    <source>
        <dbReference type="PDB" id="5BW9"/>
    </source>
</evidence>
<evidence type="ECO:0007744" key="13">
    <source>
        <dbReference type="PDB" id="5D80"/>
    </source>
</evidence>
<evidence type="ECO:0007829" key="14">
    <source>
        <dbReference type="PDB" id="1HO8"/>
    </source>
</evidence>
<evidence type="ECO:0007829" key="15">
    <source>
        <dbReference type="PDB" id="7TMO"/>
    </source>
</evidence>
<protein>
    <recommendedName>
        <fullName>V-type proton ATPase subunit H</fullName>
        <shortName>V-ATPase subunit H</shortName>
    </recommendedName>
    <alternativeName>
        <fullName>V-ATPase 54 kDa subunit</fullName>
    </alternativeName>
    <alternativeName>
        <fullName>Vacuolar proton pump subunit H</fullName>
    </alternativeName>
</protein>
<comment type="function">
    <text evidence="5 6">Subunit of the V1 complex of vacuolar(H+)-ATPase (V-ATPase), a multisubunit enzyme composed of a peripheral complex (V1) that hydrolyzes ATP and a membrane integral complex (V0) that translocates protons (PubMed:27295975, PubMed:8349704). V-ATPase is responsible for acidifying and maintaining the pH of intracellular compartments (PubMed:27295975, PubMed:8349704). This subunit is essential for activity, but not assembly, of the enzyme complex (PubMed:27295975, PubMed:8349704). This subunit is also required for silencing the ATPase activity of V-ATPase when V1 is detached from V0 (PubMed:27295975).</text>
</comment>
<comment type="subunit">
    <text evidence="1 3 4 5 6">V-ATPase is a heteromultimeric enzyme composed of a peripheral catalytic V1 complex (components A to H) attached to an integral membrane V0 proton pore complex (components: a, c, c', c'', d, e, f and VOA1) (PubMed:18055462, PubMed:25971514, PubMed:27295975, PubMed:8349704). Interacts with YND1 (PubMed:10954728).</text>
</comment>
<comment type="interaction">
    <interactant intactId="EBI-20281">
        <id>P41807</id>
    </interactant>
    <interactant intactId="EBI-20201">
        <id>P32366</id>
        <label>VMA6</label>
    </interactant>
    <organismsDiffer>false</organismsDiffer>
    <experiments>5</experiments>
</comment>
<comment type="interaction">
    <interactant intactId="EBI-20281">
        <id>P41807</id>
    </interactant>
    <interactant intactId="EBI-20272">
        <id>P39111</id>
        <label>VMA7</label>
    </interactant>
    <organismsDiffer>false</organismsDiffer>
    <experiments>4</experiments>
</comment>
<comment type="interaction">
    <interactant intactId="EBI-20281">
        <id>P41807</id>
    </interactant>
    <interactant intactId="EBI-20455">
        <id>P32563</id>
        <label>VPH1</label>
    </interactant>
    <organismsDiffer>false</organismsDiffer>
    <experiments>4</experiments>
</comment>
<comment type="subcellular location">
    <subcellularLocation>
        <location evidence="6">Vacuole membrane</location>
        <topology evidence="8">Peripheral membrane protein</topology>
        <orientation evidence="8">Cytoplasmic side</orientation>
    </subcellularLocation>
</comment>
<comment type="mass spectrometry"/>
<comment type="disruption phenotype">
    <text evidence="5">Increases the ATPase activity of membrane-detached V-ATPase V1 (PubMed:27295975). Abolishes growth at pH 7.5 and in the presence of calcium chloride, abrogates growth at pH 5.0 (PubMed:27295975).</text>
</comment>
<comment type="miscellaneous">
    <text evidence="2">Present with 22500 molecules/cell in log phase SD medium.</text>
</comment>
<comment type="similarity">
    <text evidence="8">Belongs to the V-ATPase H subunit family.</text>
</comment>
<sequence>MGATKILMDSTHFNEIRSIIRSRSVAWDALARSEELSEIDASTAKALESILVKKNIGDGLSSSNNAHSGFKVNGKTLIPLIHLLSTSDNEDCKKSVQNLIAELLSSDKYGDDTVKFFQEDPKQLEQLFDVSLKGDFQTVLISGFNVVSLLVQNGLHNVKLVEKLLKNNNLINILQNIEQMDTCYVCIRLLQELAVIPEYRDVIWLHEKKFMPTLFKILQRATDSQLATRIVATNSNHLGIQLQYHSLLLIWLLTFNPVFANELVQKYLSDFLDLLKLVKITIKEKVSRLCISIILQCCSTRVKQHKKVIKQLLLLGNALPTVQSLSERKYSDEELRQDISNLKEILENEYQELTSFDEYVAELDSKLLCWSPPHVDNGFWSDNIDEFKKDNYKIFRQLIELLQAKVRNGDVNAKQEKIIIQVALNDITHVVELLPESIDVLDKTGGKADIMELLNHSDSRVKYEALKATQAIIGYTFK</sequence>
<proteinExistence type="evidence at protein level"/>
<accession>P41807</accession>
<accession>D6W446</accession>
<organism>
    <name type="scientific">Saccharomyces cerevisiae (strain ATCC 204508 / S288c)</name>
    <name type="common">Baker's yeast</name>
    <dbReference type="NCBI Taxonomy" id="559292"/>
    <lineage>
        <taxon>Eukaryota</taxon>
        <taxon>Fungi</taxon>
        <taxon>Dikarya</taxon>
        <taxon>Ascomycota</taxon>
        <taxon>Saccharomycotina</taxon>
        <taxon>Saccharomycetes</taxon>
        <taxon>Saccharomycetales</taxon>
        <taxon>Saccharomycetaceae</taxon>
        <taxon>Saccharomyces</taxon>
    </lineage>
</organism>